<sequence length="529" mass="57983">MQACCGGNSMASLQQPGRVQGSVFPPIMPPVTKFSQQLKFNISKPFRSSFLKRNLVSEMRASSVSLPNVEISSKEIPFEDYGLGEVDPEVRTIITKEKDRQFRSLELIASENFTSRAVMEAVGSCLTNKYSEGLPGKRYYGGNEYIDQLETLCQNRALAAFRLDSTKWGVNVQPLSGSPANFAVYTAILSPHDRIMGLDLPHGGHLSHGFMTAKRRVSGTSIYFESMPYRLDESTGIVDYDMLEKTATLFRPKLIIAGASAYSRDFDYPRMRKIADSVGAFLMMDMAHISGLVAASVVADPFEYCDIVTTTTHKSLRGPRGGMIFFRKDPINGVDLESAVNNAVFPGLQGGPHNHTIGGLAVCLKHAQSPEFKAYQKRVVSNCRALANRLVELGFKLVSGGSDNHLVLVDLRPMGMDGARVEKILDMASITLNKNSVPGDKSALVPGGIRIGSPAMTTRGLSEKDFVVVADFIKEGVEITMEAKKAAPGSKLQDFNKFVTSPEFPLKERVKSLKERVETFTSRFPIPGV</sequence>
<proteinExistence type="evidence at protein level"/>
<gene>
    <name evidence="4 5" type="primary">SHM3</name>
    <name evidence="6" type="synonym">SHMT3</name>
    <name evidence="8" type="ordered locus">At4g32520</name>
    <name evidence="9" type="ORF">F8B4.220</name>
</gene>
<reference key="1">
    <citation type="journal article" date="1999" name="Nature">
        <title>Sequence and analysis of chromosome 4 of the plant Arabidopsis thaliana.</title>
        <authorList>
            <person name="Mayer K.F.X."/>
            <person name="Schueller C."/>
            <person name="Wambutt R."/>
            <person name="Murphy G."/>
            <person name="Volckaert G."/>
            <person name="Pohl T."/>
            <person name="Duesterhoeft A."/>
            <person name="Stiekema W."/>
            <person name="Entian K.-D."/>
            <person name="Terryn N."/>
            <person name="Harris B."/>
            <person name="Ansorge W."/>
            <person name="Brandt P."/>
            <person name="Grivell L.A."/>
            <person name="Rieger M."/>
            <person name="Weichselgartner M."/>
            <person name="de Simone V."/>
            <person name="Obermaier B."/>
            <person name="Mache R."/>
            <person name="Mueller M."/>
            <person name="Kreis M."/>
            <person name="Delseny M."/>
            <person name="Puigdomenech P."/>
            <person name="Watson M."/>
            <person name="Schmidtheini T."/>
            <person name="Reichert B."/>
            <person name="Portetelle D."/>
            <person name="Perez-Alonso M."/>
            <person name="Boutry M."/>
            <person name="Bancroft I."/>
            <person name="Vos P."/>
            <person name="Hoheisel J."/>
            <person name="Zimmermann W."/>
            <person name="Wedler H."/>
            <person name="Ridley P."/>
            <person name="Langham S.-A."/>
            <person name="McCullagh B."/>
            <person name="Bilham L."/>
            <person name="Robben J."/>
            <person name="van der Schueren J."/>
            <person name="Grymonprez B."/>
            <person name="Chuang Y.-J."/>
            <person name="Vandenbussche F."/>
            <person name="Braeken M."/>
            <person name="Weltjens I."/>
            <person name="Voet M."/>
            <person name="Bastiaens I."/>
            <person name="Aert R."/>
            <person name="Defoor E."/>
            <person name="Weitzenegger T."/>
            <person name="Bothe G."/>
            <person name="Ramsperger U."/>
            <person name="Hilbert H."/>
            <person name="Braun M."/>
            <person name="Holzer E."/>
            <person name="Brandt A."/>
            <person name="Peters S."/>
            <person name="van Staveren M."/>
            <person name="Dirkse W."/>
            <person name="Mooijman P."/>
            <person name="Klein Lankhorst R."/>
            <person name="Rose M."/>
            <person name="Hauf J."/>
            <person name="Koetter P."/>
            <person name="Berneiser S."/>
            <person name="Hempel S."/>
            <person name="Feldpausch M."/>
            <person name="Lamberth S."/>
            <person name="Van den Daele H."/>
            <person name="De Keyser A."/>
            <person name="Buysshaert C."/>
            <person name="Gielen J."/>
            <person name="Villarroel R."/>
            <person name="De Clercq R."/>
            <person name="van Montagu M."/>
            <person name="Rogers J."/>
            <person name="Cronin A."/>
            <person name="Quail M.A."/>
            <person name="Bray-Allen S."/>
            <person name="Clark L."/>
            <person name="Doggett J."/>
            <person name="Hall S."/>
            <person name="Kay M."/>
            <person name="Lennard N."/>
            <person name="McLay K."/>
            <person name="Mayes R."/>
            <person name="Pettett A."/>
            <person name="Rajandream M.A."/>
            <person name="Lyne M."/>
            <person name="Benes V."/>
            <person name="Rechmann S."/>
            <person name="Borkova D."/>
            <person name="Bloecker H."/>
            <person name="Scharfe M."/>
            <person name="Grimm M."/>
            <person name="Loehnert T.-H."/>
            <person name="Dose S."/>
            <person name="de Haan M."/>
            <person name="Maarse A.C."/>
            <person name="Schaefer M."/>
            <person name="Mueller-Auer S."/>
            <person name="Gabel C."/>
            <person name="Fuchs M."/>
            <person name="Fartmann B."/>
            <person name="Granderath K."/>
            <person name="Dauner D."/>
            <person name="Herzl A."/>
            <person name="Neumann S."/>
            <person name="Argiriou A."/>
            <person name="Vitale D."/>
            <person name="Liguori R."/>
            <person name="Piravandi E."/>
            <person name="Massenet O."/>
            <person name="Quigley F."/>
            <person name="Clabauld G."/>
            <person name="Muendlein A."/>
            <person name="Felber R."/>
            <person name="Schnabl S."/>
            <person name="Hiller R."/>
            <person name="Schmidt W."/>
            <person name="Lecharny A."/>
            <person name="Aubourg S."/>
            <person name="Chefdor F."/>
            <person name="Cooke R."/>
            <person name="Berger C."/>
            <person name="Monfort A."/>
            <person name="Casacuberta E."/>
            <person name="Gibbons T."/>
            <person name="Weber N."/>
            <person name="Vandenbol M."/>
            <person name="Bargues M."/>
            <person name="Terol J."/>
            <person name="Torres A."/>
            <person name="Perez-Perez A."/>
            <person name="Purnelle B."/>
            <person name="Bent E."/>
            <person name="Johnson S."/>
            <person name="Tacon D."/>
            <person name="Jesse T."/>
            <person name="Heijnen L."/>
            <person name="Schwarz S."/>
            <person name="Scholler P."/>
            <person name="Heber S."/>
            <person name="Francs P."/>
            <person name="Bielke C."/>
            <person name="Frishman D."/>
            <person name="Haase D."/>
            <person name="Lemcke K."/>
            <person name="Mewes H.-W."/>
            <person name="Stocker S."/>
            <person name="Zaccaria P."/>
            <person name="Bevan M."/>
            <person name="Wilson R.K."/>
            <person name="de la Bastide M."/>
            <person name="Habermann K."/>
            <person name="Parnell L."/>
            <person name="Dedhia N."/>
            <person name="Gnoj L."/>
            <person name="Schutz K."/>
            <person name="Huang E."/>
            <person name="Spiegel L."/>
            <person name="Sekhon M."/>
            <person name="Murray J."/>
            <person name="Sheet P."/>
            <person name="Cordes M."/>
            <person name="Abu-Threideh J."/>
            <person name="Stoneking T."/>
            <person name="Kalicki J."/>
            <person name="Graves T."/>
            <person name="Harmon G."/>
            <person name="Edwards J."/>
            <person name="Latreille P."/>
            <person name="Courtney L."/>
            <person name="Cloud J."/>
            <person name="Abbott A."/>
            <person name="Scott K."/>
            <person name="Johnson D."/>
            <person name="Minx P."/>
            <person name="Bentley D."/>
            <person name="Fulton B."/>
            <person name="Miller N."/>
            <person name="Greco T."/>
            <person name="Kemp K."/>
            <person name="Kramer J."/>
            <person name="Fulton L."/>
            <person name="Mardis E."/>
            <person name="Dante M."/>
            <person name="Pepin K."/>
            <person name="Hillier L.W."/>
            <person name="Nelson J."/>
            <person name="Spieth J."/>
            <person name="Ryan E."/>
            <person name="Andrews S."/>
            <person name="Geisel C."/>
            <person name="Layman D."/>
            <person name="Du H."/>
            <person name="Ali J."/>
            <person name="Berghoff A."/>
            <person name="Jones K."/>
            <person name="Drone K."/>
            <person name="Cotton M."/>
            <person name="Joshu C."/>
            <person name="Antonoiu B."/>
            <person name="Zidanic M."/>
            <person name="Strong C."/>
            <person name="Sun H."/>
            <person name="Lamar B."/>
            <person name="Yordan C."/>
            <person name="Ma P."/>
            <person name="Zhong J."/>
            <person name="Preston R."/>
            <person name="Vil D."/>
            <person name="Shekher M."/>
            <person name="Matero A."/>
            <person name="Shah R."/>
            <person name="Swaby I.K."/>
            <person name="O'Shaughnessy A."/>
            <person name="Rodriguez M."/>
            <person name="Hoffman J."/>
            <person name="Till S."/>
            <person name="Granat S."/>
            <person name="Shohdy N."/>
            <person name="Hasegawa A."/>
            <person name="Hameed A."/>
            <person name="Lodhi M."/>
            <person name="Johnson A."/>
            <person name="Chen E."/>
            <person name="Marra M.A."/>
            <person name="Martienssen R."/>
            <person name="McCombie W.R."/>
        </authorList>
    </citation>
    <scope>NUCLEOTIDE SEQUENCE [LARGE SCALE GENOMIC DNA]</scope>
    <source>
        <strain>cv. Columbia</strain>
    </source>
</reference>
<reference key="2">
    <citation type="journal article" date="2017" name="Plant J.">
        <title>Araport11: a complete reannotation of the Arabidopsis thaliana reference genome.</title>
        <authorList>
            <person name="Cheng C.Y."/>
            <person name="Krishnakumar V."/>
            <person name="Chan A.P."/>
            <person name="Thibaud-Nissen F."/>
            <person name="Schobel S."/>
            <person name="Town C.D."/>
        </authorList>
    </citation>
    <scope>GENOME REANNOTATION</scope>
    <source>
        <strain>cv. Columbia</strain>
    </source>
</reference>
<reference key="3">
    <citation type="journal article" date="2003" name="Science">
        <title>Empirical analysis of transcriptional activity in the Arabidopsis genome.</title>
        <authorList>
            <person name="Yamada K."/>
            <person name="Lim J."/>
            <person name="Dale J.M."/>
            <person name="Chen H."/>
            <person name="Shinn P."/>
            <person name="Palm C.J."/>
            <person name="Southwick A.M."/>
            <person name="Wu H.C."/>
            <person name="Kim C.J."/>
            <person name="Nguyen M."/>
            <person name="Pham P.K."/>
            <person name="Cheuk R.F."/>
            <person name="Karlin-Newmann G."/>
            <person name="Liu S.X."/>
            <person name="Lam B."/>
            <person name="Sakano H."/>
            <person name="Wu T."/>
            <person name="Yu G."/>
            <person name="Miranda M."/>
            <person name="Quach H.L."/>
            <person name="Tripp M."/>
            <person name="Chang C.H."/>
            <person name="Lee J.M."/>
            <person name="Toriumi M.J."/>
            <person name="Chan M.M."/>
            <person name="Tang C.C."/>
            <person name="Onodera C.S."/>
            <person name="Deng J.M."/>
            <person name="Akiyama K."/>
            <person name="Ansari Y."/>
            <person name="Arakawa T."/>
            <person name="Banh J."/>
            <person name="Banno F."/>
            <person name="Bowser L."/>
            <person name="Brooks S.Y."/>
            <person name="Carninci P."/>
            <person name="Chao Q."/>
            <person name="Choy N."/>
            <person name="Enju A."/>
            <person name="Goldsmith A.D."/>
            <person name="Gurjal M."/>
            <person name="Hansen N.F."/>
            <person name="Hayashizaki Y."/>
            <person name="Johnson-Hopson C."/>
            <person name="Hsuan V.W."/>
            <person name="Iida K."/>
            <person name="Karnes M."/>
            <person name="Khan S."/>
            <person name="Koesema E."/>
            <person name="Ishida J."/>
            <person name="Jiang P.X."/>
            <person name="Jones T."/>
            <person name="Kawai J."/>
            <person name="Kamiya A."/>
            <person name="Meyers C."/>
            <person name="Nakajima M."/>
            <person name="Narusaka M."/>
            <person name="Seki M."/>
            <person name="Sakurai T."/>
            <person name="Satou M."/>
            <person name="Tamse R."/>
            <person name="Vaysberg M."/>
            <person name="Wallender E.K."/>
            <person name="Wong C."/>
            <person name="Yamamura Y."/>
            <person name="Yuan S."/>
            <person name="Shinozaki K."/>
            <person name="Davis R.W."/>
            <person name="Theologis A."/>
            <person name="Ecker J.R."/>
        </authorList>
    </citation>
    <scope>NUCLEOTIDE SEQUENCE [LARGE SCALE MRNA]</scope>
    <source>
        <strain>cv. Columbia</strain>
    </source>
</reference>
<reference key="4">
    <citation type="journal article" date="2000" name="Plant Physiol.">
        <title>Integrated temporal regulation of the photorespiratory pathway. Circadian regulation of two Arabidopsis genes encoding serine hydroxymethyltransferase.</title>
        <authorList>
            <person name="McClung C.R."/>
            <person name="Hsu M."/>
            <person name="Painter J.E."/>
            <person name="Gagne J.M."/>
            <person name="Karlsberg S.D."/>
            <person name="Salome P.A."/>
        </authorList>
    </citation>
    <scope>GENE FAMILY</scope>
    <scope>NOMENCLATURE</scope>
</reference>
<reference key="5">
    <citation type="journal article" date="2003" name="J. Exp. Bot.">
        <title>Genetic manipulation of glycine decarboxylation.</title>
        <authorList>
            <person name="Bauwe H."/>
            <person name="Kolukisaoglu U."/>
        </authorList>
    </citation>
    <scope>REVIEW</scope>
</reference>
<reference key="6">
    <citation type="journal article" date="2010" name="Biochem. J.">
        <title>One-carbon metabolism in plants: characterization of a plastid serine hydroxymethyltransferase.</title>
        <authorList>
            <person name="Zhang Y."/>
            <person name="Sun K."/>
            <person name="Sandoval F.J."/>
            <person name="Santiago K."/>
            <person name="Roje S."/>
        </authorList>
    </citation>
    <scope>GENE FAMILY</scope>
    <scope>FUNCTION</scope>
    <scope>SUBCELLULAR LOCATION</scope>
    <scope>BIOPHYSICOCHEMICAL PROPERTIES</scope>
    <scope>CATALYTIC ACTIVITY</scope>
    <scope>PATHWAY</scope>
    <scope>ACTIVITY REGULATION</scope>
</reference>
<keyword id="KW-0150">Chloroplast</keyword>
<keyword id="KW-0554">One-carbon metabolism</keyword>
<keyword id="KW-0934">Plastid</keyword>
<keyword id="KW-0663">Pyridoxal phosphate</keyword>
<keyword id="KW-1185">Reference proteome</keyword>
<keyword id="KW-0808">Transferase</keyword>
<keyword id="KW-0809">Transit peptide</keyword>
<accession>Q94JQ3</accession>
<accession>F4JUC7</accession>
<accession>Q9SUU0</accession>
<protein>
    <recommendedName>
        <fullName evidence="4 5">Serine hydroxymethyltransferase 3, chloroplastic</fullName>
        <shortName evidence="5">AtSHM3</shortName>
        <shortName evidence="6">AtSHMT3</shortName>
        <ecNumber evidence="3">2.1.2.1</ecNumber>
    </recommendedName>
    <alternativeName>
        <fullName evidence="6">Glycine hydroxymethyltransferase 3</fullName>
    </alternativeName>
    <alternativeName>
        <fullName evidence="6">Serine methylase 3</fullName>
    </alternativeName>
</protein>
<dbReference type="EC" id="2.1.2.1" evidence="3"/>
<dbReference type="EMBL" id="AL034567">
    <property type="protein sequence ID" value="CAA22579.1"/>
    <property type="status" value="ALT_SEQ"/>
    <property type="molecule type" value="Genomic_DNA"/>
</dbReference>
<dbReference type="EMBL" id="AL161581">
    <property type="protein sequence ID" value="CAB79969.1"/>
    <property type="status" value="ALT_SEQ"/>
    <property type="molecule type" value="Genomic_DNA"/>
</dbReference>
<dbReference type="EMBL" id="CP002687">
    <property type="protein sequence ID" value="AEE86071.1"/>
    <property type="molecule type" value="Genomic_DNA"/>
</dbReference>
<dbReference type="EMBL" id="CP002687">
    <property type="protein sequence ID" value="AEE86072.1"/>
    <property type="molecule type" value="Genomic_DNA"/>
</dbReference>
<dbReference type="EMBL" id="AF375450">
    <property type="protein sequence ID" value="AAK53034.1"/>
    <property type="molecule type" value="mRNA"/>
</dbReference>
<dbReference type="EMBL" id="BT000641">
    <property type="protein sequence ID" value="AAN18207.1"/>
    <property type="molecule type" value="mRNA"/>
</dbReference>
<dbReference type="PIR" id="T05362">
    <property type="entry name" value="T05362"/>
</dbReference>
<dbReference type="RefSeq" id="NP_001119098.1">
    <property type="nucleotide sequence ID" value="NM_001125626.1"/>
</dbReference>
<dbReference type="RefSeq" id="NP_567895.1">
    <property type="nucleotide sequence ID" value="NM_119404.3"/>
</dbReference>
<dbReference type="SMR" id="Q94JQ3"/>
<dbReference type="BioGRID" id="14673">
    <property type="interactions" value="6"/>
</dbReference>
<dbReference type="FunCoup" id="Q94JQ3">
    <property type="interactions" value="1972"/>
</dbReference>
<dbReference type="IntAct" id="Q94JQ3">
    <property type="interactions" value="3"/>
</dbReference>
<dbReference type="STRING" id="3702.Q94JQ3"/>
<dbReference type="iPTMnet" id="Q94JQ3"/>
<dbReference type="PaxDb" id="3702-AT4G32520.1"/>
<dbReference type="ProteomicsDB" id="248545"/>
<dbReference type="EnsemblPlants" id="AT4G32520.1">
    <property type="protein sequence ID" value="AT4G32520.1"/>
    <property type="gene ID" value="AT4G32520"/>
</dbReference>
<dbReference type="EnsemblPlants" id="AT4G32520.2">
    <property type="protein sequence ID" value="AT4G32520.2"/>
    <property type="gene ID" value="AT4G32520"/>
</dbReference>
<dbReference type="GeneID" id="829387"/>
<dbReference type="Gramene" id="AT4G32520.1">
    <property type="protein sequence ID" value="AT4G32520.1"/>
    <property type="gene ID" value="AT4G32520"/>
</dbReference>
<dbReference type="Gramene" id="AT4G32520.2">
    <property type="protein sequence ID" value="AT4G32520.2"/>
    <property type="gene ID" value="AT4G32520"/>
</dbReference>
<dbReference type="KEGG" id="ath:AT4G32520"/>
<dbReference type="Araport" id="AT4G32520"/>
<dbReference type="TAIR" id="AT4G32520">
    <property type="gene designation" value="SHM3"/>
</dbReference>
<dbReference type="eggNOG" id="KOG2467">
    <property type="taxonomic scope" value="Eukaryota"/>
</dbReference>
<dbReference type="HOGENOM" id="CLU_022477_0_1_1"/>
<dbReference type="InParanoid" id="Q94JQ3"/>
<dbReference type="OMA" id="CRATPTE"/>
<dbReference type="BioCyc" id="ARA:AT4G32520-MONOMER"/>
<dbReference type="BRENDA" id="2.1.2.1">
    <property type="organism ID" value="399"/>
</dbReference>
<dbReference type="SABIO-RK" id="Q94JQ3"/>
<dbReference type="UniPathway" id="UPA00193"/>
<dbReference type="CD-CODE" id="4299E36E">
    <property type="entry name" value="Nucleolus"/>
</dbReference>
<dbReference type="PRO" id="PR:Q94JQ3"/>
<dbReference type="Proteomes" id="UP000006548">
    <property type="component" value="Chromosome 4"/>
</dbReference>
<dbReference type="ExpressionAtlas" id="Q94JQ3">
    <property type="expression patterns" value="baseline and differential"/>
</dbReference>
<dbReference type="GO" id="GO:0009507">
    <property type="term" value="C:chloroplast"/>
    <property type="evidence" value="ECO:0007005"/>
    <property type="project" value="TAIR"/>
</dbReference>
<dbReference type="GO" id="GO:0009570">
    <property type="term" value="C:chloroplast stroma"/>
    <property type="evidence" value="ECO:0007005"/>
    <property type="project" value="TAIR"/>
</dbReference>
<dbReference type="GO" id="GO:0005886">
    <property type="term" value="C:plasma membrane"/>
    <property type="evidence" value="ECO:0007005"/>
    <property type="project" value="TAIR"/>
</dbReference>
<dbReference type="GO" id="GO:0009536">
    <property type="term" value="C:plastid"/>
    <property type="evidence" value="ECO:0000314"/>
    <property type="project" value="TAIR"/>
</dbReference>
<dbReference type="GO" id="GO:0004372">
    <property type="term" value="F:glycine hydroxymethyltransferase activity"/>
    <property type="evidence" value="ECO:0000314"/>
    <property type="project" value="TAIR"/>
</dbReference>
<dbReference type="GO" id="GO:0030170">
    <property type="term" value="F:pyridoxal phosphate binding"/>
    <property type="evidence" value="ECO:0007669"/>
    <property type="project" value="InterPro"/>
</dbReference>
<dbReference type="GO" id="GO:0019264">
    <property type="term" value="P:glycine biosynthetic process from serine"/>
    <property type="evidence" value="ECO:0007669"/>
    <property type="project" value="InterPro"/>
</dbReference>
<dbReference type="GO" id="GO:0035999">
    <property type="term" value="P:tetrahydrofolate interconversion"/>
    <property type="evidence" value="ECO:0007669"/>
    <property type="project" value="UniProtKB-UniPathway"/>
</dbReference>
<dbReference type="CDD" id="cd00378">
    <property type="entry name" value="SHMT"/>
    <property type="match status" value="1"/>
</dbReference>
<dbReference type="FunFam" id="3.40.640.10:FF:000050">
    <property type="entry name" value="Serine hydroxymethyltransferase"/>
    <property type="match status" value="1"/>
</dbReference>
<dbReference type="Gene3D" id="3.90.1150.10">
    <property type="entry name" value="Aspartate Aminotransferase, domain 1"/>
    <property type="match status" value="1"/>
</dbReference>
<dbReference type="Gene3D" id="3.40.640.10">
    <property type="entry name" value="Type I PLP-dependent aspartate aminotransferase-like (Major domain)"/>
    <property type="match status" value="1"/>
</dbReference>
<dbReference type="HAMAP" id="MF_00051">
    <property type="entry name" value="SHMT"/>
    <property type="match status" value="1"/>
</dbReference>
<dbReference type="InterPro" id="IPR015424">
    <property type="entry name" value="PyrdxlP-dep_Trfase"/>
</dbReference>
<dbReference type="InterPro" id="IPR015421">
    <property type="entry name" value="PyrdxlP-dep_Trfase_major"/>
</dbReference>
<dbReference type="InterPro" id="IPR015422">
    <property type="entry name" value="PyrdxlP-dep_Trfase_small"/>
</dbReference>
<dbReference type="InterPro" id="IPR001085">
    <property type="entry name" value="Ser_HO-MeTrfase"/>
</dbReference>
<dbReference type="InterPro" id="IPR049943">
    <property type="entry name" value="Ser_HO-MeTrfase-like"/>
</dbReference>
<dbReference type="InterPro" id="IPR019798">
    <property type="entry name" value="Ser_HO-MeTrfase_PLP_BS"/>
</dbReference>
<dbReference type="InterPro" id="IPR039429">
    <property type="entry name" value="SHMT-like_dom"/>
</dbReference>
<dbReference type="NCBIfam" id="NF000586">
    <property type="entry name" value="PRK00011.1"/>
    <property type="match status" value="1"/>
</dbReference>
<dbReference type="PANTHER" id="PTHR11680">
    <property type="entry name" value="SERINE HYDROXYMETHYLTRANSFERASE"/>
    <property type="match status" value="1"/>
</dbReference>
<dbReference type="PANTHER" id="PTHR11680:SF63">
    <property type="entry name" value="SERINE HYDROXYMETHYLTRANSFERASE 3, CHLOROPLASTIC"/>
    <property type="match status" value="1"/>
</dbReference>
<dbReference type="Pfam" id="PF00464">
    <property type="entry name" value="SHMT"/>
    <property type="match status" value="1"/>
</dbReference>
<dbReference type="PIRSF" id="PIRSF000412">
    <property type="entry name" value="SHMT"/>
    <property type="match status" value="1"/>
</dbReference>
<dbReference type="SUPFAM" id="SSF53383">
    <property type="entry name" value="PLP-dependent transferases"/>
    <property type="match status" value="1"/>
</dbReference>
<dbReference type="PROSITE" id="PS00096">
    <property type="entry name" value="SHMT"/>
    <property type="match status" value="1"/>
</dbReference>
<evidence type="ECO:0000250" key="1">
    <source>
        <dbReference type="UniProtKB" id="P34896"/>
    </source>
</evidence>
<evidence type="ECO:0000255" key="2"/>
<evidence type="ECO:0000269" key="3">
    <source>
    </source>
</evidence>
<evidence type="ECO:0000303" key="4">
    <source>
    </source>
</evidence>
<evidence type="ECO:0000303" key="5">
    <source>
    </source>
</evidence>
<evidence type="ECO:0000303" key="6">
    <source>
    </source>
</evidence>
<evidence type="ECO:0000305" key="7"/>
<evidence type="ECO:0000312" key="8">
    <source>
        <dbReference type="Araport" id="AT4G32520"/>
    </source>
</evidence>
<evidence type="ECO:0000312" key="9">
    <source>
        <dbReference type="EMBL" id="CAA22579.1"/>
    </source>
</evidence>
<organism>
    <name type="scientific">Arabidopsis thaliana</name>
    <name type="common">Mouse-ear cress</name>
    <dbReference type="NCBI Taxonomy" id="3702"/>
    <lineage>
        <taxon>Eukaryota</taxon>
        <taxon>Viridiplantae</taxon>
        <taxon>Streptophyta</taxon>
        <taxon>Embryophyta</taxon>
        <taxon>Tracheophyta</taxon>
        <taxon>Spermatophyta</taxon>
        <taxon>Magnoliopsida</taxon>
        <taxon>eudicotyledons</taxon>
        <taxon>Gunneridae</taxon>
        <taxon>Pentapetalae</taxon>
        <taxon>rosids</taxon>
        <taxon>malvids</taxon>
        <taxon>Brassicales</taxon>
        <taxon>Brassicaceae</taxon>
        <taxon>Camelineae</taxon>
        <taxon>Arabidopsis</taxon>
    </lineage>
</organism>
<feature type="transit peptide" description="Chloroplast" evidence="2">
    <location>
        <begin position="1"/>
        <end position="60"/>
    </location>
</feature>
<feature type="chain" id="PRO_0000422348" description="Serine hydroxymethyltransferase 3, chloroplastic">
    <location>
        <begin position="61"/>
        <end position="529"/>
    </location>
</feature>
<feature type="modified residue" description="N6-(pyridoxal phosphate)lysine" evidence="1">
    <location>
        <position position="314"/>
    </location>
</feature>
<feature type="sequence conflict" description="In Ref. 3; AAK53034/AAN18207." evidence="7" ref="3">
    <original>K</original>
    <variation>T</variation>
    <location>
        <position position="514"/>
    </location>
</feature>
<name>GLYP3_ARATH</name>
<comment type="function">
    <text evidence="3">Catalyzes the interconversion of serine and glycine and directs the hydroxymethyl moiety of serine into the metabolic network of H4PteGlu(n)-bound one-carbon units.</text>
</comment>
<comment type="catalytic activity">
    <reaction evidence="3">
        <text>(6R)-5,10-methylene-5,6,7,8-tetrahydrofolate + glycine + H2O = (6S)-5,6,7,8-tetrahydrofolate + L-serine</text>
        <dbReference type="Rhea" id="RHEA:15481"/>
        <dbReference type="ChEBI" id="CHEBI:15377"/>
        <dbReference type="ChEBI" id="CHEBI:15636"/>
        <dbReference type="ChEBI" id="CHEBI:33384"/>
        <dbReference type="ChEBI" id="CHEBI:57305"/>
        <dbReference type="ChEBI" id="CHEBI:57453"/>
        <dbReference type="EC" id="2.1.2.1"/>
    </reaction>
</comment>
<comment type="cofactor">
    <cofactor evidence="1">
        <name>pyridoxal 5'-phosphate</name>
        <dbReference type="ChEBI" id="CHEBI:597326"/>
    </cofactor>
</comment>
<comment type="activity regulation">
    <text evidence="3">Inhibited by 5-CH3-H4PteGlu1/5 and 5-HCO-H4PteGlu1/5 in vitro.</text>
</comment>
<comment type="biophysicochemical properties">
    <kinetics>
        <KM evidence="3">217.7 uM for H4PteGlu1 (at pH 8.5)</KM>
        <KM evidence="3">13.3 uM for H4PteGlu2 (at pH 8.5)</KM>
        <KM evidence="3">3.06 uM for H4PteGlu3 (at pH 8.5)</KM>
        <KM evidence="3">0.83 uM for H4PteGlu4 (at pH 8.5)</KM>
        <KM evidence="3">0.64 uM for H4PteGlu5 (at pH 8.5)</KM>
        <KM evidence="3">0.69 uM for H4PteGlu6 (at pH 8.5)</KM>
        <KM evidence="3">0.67 uM for H4PteGlu7 (at pH 8.5)</KM>
        <KM evidence="3">0.55 uM for H4PteGlu8 (at pH 8.5)</KM>
        <text evidence="3">kcat is 15.8 sec(-1) with H4PteGlu1 as substrate (at pH 8.5) (PubMed:20518745). kcat is 7.6 sec(-1) with H4PteGlu2 as substrate (at pH 8.5) (PubMed:20518745). kcat is 8.7 sec(-1) with H4PteGlu3 as substrate (at pH 8.5) (PubMed:20518745). kcat is 4.3 sec(-1) with H4PteGlu4 as substrate (at pH 8.5) (PubMed:20518745). kcat is 3.5 sec(-1) with H4PteGlu5 as substrate (at pH 8.5) (PubMed:20518745). kcat is 3.5 sec(-1) with H4PteGlu6 as substrate (at pH 8.5) (PubMed:20518745). kcat is 3.8 sec(-1) with H4PteGlu7 as substrate (at pH 8.5) (PubMed:20518745). kcat is 3.3 sec(-1) with H4PteGlu8 as substrate (at pH 8.5) (PubMed:20518745).</text>
    </kinetics>
</comment>
<comment type="pathway">
    <text evidence="3">One-carbon metabolism; tetrahydrofolate interconversion.</text>
</comment>
<comment type="subunit">
    <text evidence="1">Homotetramer.</text>
</comment>
<comment type="subcellular location">
    <subcellularLocation>
        <location evidence="3">Plastid</location>
        <location evidence="3">Chloroplast</location>
    </subcellularLocation>
</comment>
<comment type="similarity">
    <text evidence="7">Belongs to the SHMT family.</text>
</comment>
<comment type="sequence caution" evidence="7">
    <conflict type="erroneous gene model prediction">
        <sequence resource="EMBL-CDS" id="CAA22579"/>
    </conflict>
</comment>
<comment type="sequence caution" evidence="7">
    <conflict type="erroneous gene model prediction">
        <sequence resource="EMBL-CDS" id="CAB79969"/>
    </conflict>
</comment>